<protein>
    <recommendedName>
        <fullName evidence="2">Large ribosomal subunit protein uL29</fullName>
    </recommendedName>
    <alternativeName>
        <fullName>50S ribosomal protein L29</fullName>
    </alternativeName>
</protein>
<organism>
    <name type="scientific">Escherichia coli O6:H1 (strain CFT073 / ATCC 700928 / UPEC)</name>
    <dbReference type="NCBI Taxonomy" id="199310"/>
    <lineage>
        <taxon>Bacteria</taxon>
        <taxon>Pseudomonadati</taxon>
        <taxon>Pseudomonadota</taxon>
        <taxon>Gammaproteobacteria</taxon>
        <taxon>Enterobacterales</taxon>
        <taxon>Enterobacteriaceae</taxon>
        <taxon>Escherichia</taxon>
    </lineage>
</organism>
<evidence type="ECO:0000250" key="1"/>
<evidence type="ECO:0000305" key="2"/>
<sequence>MKAKELREKSVEELNTELLNLLREQFNLRMQAASGQLQQSHLLKQVRRDVARVKTLLNEKAGA</sequence>
<keyword id="KW-1185">Reference proteome</keyword>
<keyword id="KW-0687">Ribonucleoprotein</keyword>
<keyword id="KW-0689">Ribosomal protein</keyword>
<gene>
    <name type="primary">rpmC</name>
    <name type="ordered locus">c4077</name>
</gene>
<comment type="function">
    <text evidence="1">One of the proteins that surrounds the polypeptide exit tunnel on the outside of the subunit.</text>
</comment>
<comment type="similarity">
    <text evidence="2">Belongs to the universal ribosomal protein uL29 family.</text>
</comment>
<dbReference type="EMBL" id="AE014075">
    <property type="protein sequence ID" value="AAN82515.1"/>
    <property type="molecule type" value="Genomic_DNA"/>
</dbReference>
<dbReference type="RefSeq" id="WP_000644741.1">
    <property type="nucleotide sequence ID" value="NZ_CP051263.1"/>
</dbReference>
<dbReference type="SMR" id="P0A7M7"/>
<dbReference type="STRING" id="199310.c4077"/>
<dbReference type="GeneID" id="93778675"/>
<dbReference type="KEGG" id="ecc:c4077"/>
<dbReference type="eggNOG" id="COG0255">
    <property type="taxonomic scope" value="Bacteria"/>
</dbReference>
<dbReference type="HOGENOM" id="CLU_158491_1_2_6"/>
<dbReference type="BioCyc" id="ECOL199310:C4077-MONOMER"/>
<dbReference type="Proteomes" id="UP000001410">
    <property type="component" value="Chromosome"/>
</dbReference>
<dbReference type="GO" id="GO:0022625">
    <property type="term" value="C:cytosolic large ribosomal subunit"/>
    <property type="evidence" value="ECO:0007669"/>
    <property type="project" value="TreeGrafter"/>
</dbReference>
<dbReference type="GO" id="GO:0003735">
    <property type="term" value="F:structural constituent of ribosome"/>
    <property type="evidence" value="ECO:0007669"/>
    <property type="project" value="InterPro"/>
</dbReference>
<dbReference type="GO" id="GO:0006412">
    <property type="term" value="P:translation"/>
    <property type="evidence" value="ECO:0007669"/>
    <property type="project" value="UniProtKB-UniRule"/>
</dbReference>
<dbReference type="CDD" id="cd00427">
    <property type="entry name" value="Ribosomal_L29_HIP"/>
    <property type="match status" value="1"/>
</dbReference>
<dbReference type="Gene3D" id="6.10.140.1970">
    <property type="match status" value="1"/>
</dbReference>
<dbReference type="HAMAP" id="MF_00374">
    <property type="entry name" value="Ribosomal_uL29"/>
    <property type="match status" value="1"/>
</dbReference>
<dbReference type="InterPro" id="IPR050063">
    <property type="entry name" value="Ribosomal_protein_uL29"/>
</dbReference>
<dbReference type="InterPro" id="IPR001854">
    <property type="entry name" value="Ribosomal_uL29"/>
</dbReference>
<dbReference type="InterPro" id="IPR018254">
    <property type="entry name" value="Ribosomal_uL29_CS"/>
</dbReference>
<dbReference type="InterPro" id="IPR036049">
    <property type="entry name" value="Ribosomal_uL29_sf"/>
</dbReference>
<dbReference type="NCBIfam" id="TIGR00012">
    <property type="entry name" value="L29"/>
    <property type="match status" value="1"/>
</dbReference>
<dbReference type="PANTHER" id="PTHR10916">
    <property type="entry name" value="60S RIBOSOMAL PROTEIN L35/50S RIBOSOMAL PROTEIN L29"/>
    <property type="match status" value="1"/>
</dbReference>
<dbReference type="PANTHER" id="PTHR10916:SF0">
    <property type="entry name" value="LARGE RIBOSOMAL SUBUNIT PROTEIN UL29C"/>
    <property type="match status" value="1"/>
</dbReference>
<dbReference type="Pfam" id="PF00831">
    <property type="entry name" value="Ribosomal_L29"/>
    <property type="match status" value="1"/>
</dbReference>
<dbReference type="SUPFAM" id="SSF46561">
    <property type="entry name" value="Ribosomal protein L29 (L29p)"/>
    <property type="match status" value="1"/>
</dbReference>
<dbReference type="PROSITE" id="PS00579">
    <property type="entry name" value="RIBOSOMAL_L29"/>
    <property type="match status" value="1"/>
</dbReference>
<accession>P0A7M7</accession>
<accession>P02429</accession>
<reference key="1">
    <citation type="journal article" date="2002" name="Proc. Natl. Acad. Sci. U.S.A.">
        <title>Extensive mosaic structure revealed by the complete genome sequence of uropathogenic Escherichia coli.</title>
        <authorList>
            <person name="Welch R.A."/>
            <person name="Burland V."/>
            <person name="Plunkett G. III"/>
            <person name="Redford P."/>
            <person name="Roesch P."/>
            <person name="Rasko D."/>
            <person name="Buckles E.L."/>
            <person name="Liou S.-R."/>
            <person name="Boutin A."/>
            <person name="Hackett J."/>
            <person name="Stroud D."/>
            <person name="Mayhew G.F."/>
            <person name="Rose D.J."/>
            <person name="Zhou S."/>
            <person name="Schwartz D.C."/>
            <person name="Perna N.T."/>
            <person name="Mobley H.L.T."/>
            <person name="Donnenberg M.S."/>
            <person name="Blattner F.R."/>
        </authorList>
    </citation>
    <scope>NUCLEOTIDE SEQUENCE [LARGE SCALE GENOMIC DNA]</scope>
    <source>
        <strain>CFT073 / ATCC 700928 / UPEC</strain>
    </source>
</reference>
<proteinExistence type="inferred from homology"/>
<name>RL29_ECOL6</name>
<feature type="chain" id="PRO_0000130385" description="Large ribosomal subunit protein uL29">
    <location>
        <begin position="1"/>
        <end position="63"/>
    </location>
</feature>